<protein>
    <recommendedName>
        <fullName>Gamma-crystallin 1</fullName>
    </recommendedName>
    <alternativeName>
        <fullName>Gamma-crystallin I</fullName>
    </alternativeName>
</protein>
<name>CRG1_RANTE</name>
<comment type="function">
    <text>Crystallins are the dominant structural components of the vertebrate eye lens.</text>
</comment>
<comment type="subunit">
    <text evidence="1">Monomer.</text>
</comment>
<comment type="domain">
    <text>Has a two-domain beta-structure, folded into four very similar Greek key motifs.</text>
</comment>
<comment type="miscellaneous">
    <text>There are at least four genes coding for non-identical gamma crystallins in this multigene family.</text>
</comment>
<comment type="similarity">
    <text evidence="3">Belongs to the beta/gamma-crystallin family.</text>
</comment>
<reference key="1">
    <citation type="journal article" date="1982" name="FEBS Lett.">
        <title>The nucleotide sequence of a cloned cDNA corresponding to one of the gamma-crystallins from the eye lens of the frog Rana temporaria.</title>
        <authorList>
            <person name="Tomarev S.I."/>
            <person name="Krayev A.S."/>
            <person name="Skryabin K.G."/>
            <person name="Bayev A.A."/>
            <person name="Gause G.G. Jr."/>
        </authorList>
    </citation>
    <scope>NUCLEOTIDE SEQUENCE [MRNA]</scope>
</reference>
<reference key="2">
    <citation type="journal article" date="1982" name="Dokl. Biochem.">
        <title>Presence of internal duplication in mRNA coding one of the gamma-crystallins of the crystalline lens of the eye of the frog Rana temporaria.</title>
        <authorList>
            <person name="Tomarev S.I."/>
            <person name="Krayev A.S."/>
            <person name="Skryabin K.G."/>
            <person name="Gause G.G. Jr."/>
            <person name="Bayev A.A."/>
        </authorList>
    </citation>
    <scope>NUCLEOTIDE SEQUENCE [MRNA]</scope>
</reference>
<keyword id="KW-0273">Eye lens protein</keyword>
<keyword id="KW-0677">Repeat</keyword>
<feature type="chain" id="PRO_0000057572" description="Gamma-crystallin 1">
    <location>
        <begin position="1" status="less than"/>
        <end position="133"/>
    </location>
</feature>
<feature type="domain" description="Beta/gamma crystallin 'Greek key' 2" evidence="2">
    <location>
        <begin position="1" status="less than"/>
        <end position="41"/>
    </location>
</feature>
<feature type="domain" description="Beta/gamma crystallin 'Greek key' 3" evidence="2">
    <location>
        <begin position="47"/>
        <end position="87"/>
    </location>
</feature>
<feature type="domain" description="Beta/gamma crystallin 'Greek key' 4" evidence="2">
    <location>
        <begin position="88"/>
        <end position="130"/>
    </location>
</feature>
<feature type="region of interest" description="Connecting peptide">
    <location>
        <begin position="42"/>
        <end position="46"/>
    </location>
</feature>
<feature type="non-terminal residue">
    <location>
        <position position="1"/>
    </location>
</feature>
<accession>P02530</accession>
<proteinExistence type="evidence at transcript level"/>
<sequence>WMLYEHPNYTGHQYFLRRGEYPDFQQWMGLNDSIRSCRVIPQHRGSFRLRIYEREEFRGQMMEFTEDCPQVHEEFNYHDIHSCNVLEGHWILYEQPNYRGRQYYLRPGEYRRYTEWGAVTPRVGAFRRVQEMF</sequence>
<organism>
    <name type="scientific">Rana temporaria</name>
    <name type="common">European common frog</name>
    <dbReference type="NCBI Taxonomy" id="8407"/>
    <lineage>
        <taxon>Eukaryota</taxon>
        <taxon>Metazoa</taxon>
        <taxon>Chordata</taxon>
        <taxon>Craniata</taxon>
        <taxon>Vertebrata</taxon>
        <taxon>Euteleostomi</taxon>
        <taxon>Amphibia</taxon>
        <taxon>Batrachia</taxon>
        <taxon>Anura</taxon>
        <taxon>Neobatrachia</taxon>
        <taxon>Ranoidea</taxon>
        <taxon>Ranidae</taxon>
        <taxon>Rana</taxon>
        <taxon>Rana</taxon>
    </lineage>
</organism>
<evidence type="ECO:0000250" key="1"/>
<evidence type="ECO:0000255" key="2">
    <source>
        <dbReference type="PROSITE-ProRule" id="PRU00028"/>
    </source>
</evidence>
<evidence type="ECO:0000305" key="3"/>
<dbReference type="EMBL" id="M24189">
    <property type="protein sequence ID" value="AAA49522.1"/>
    <property type="molecule type" value="mRNA"/>
</dbReference>
<dbReference type="EMBL" id="J00927">
    <property type="protein sequence ID" value="AAA49515.1"/>
    <property type="molecule type" value="mRNA"/>
</dbReference>
<dbReference type="EMBL" id="J00928">
    <property type="protein sequence ID" value="AAA49520.1"/>
    <property type="molecule type" value="mRNA"/>
</dbReference>
<dbReference type="PIR" id="A02936">
    <property type="entry name" value="CYFGG"/>
</dbReference>
<dbReference type="SMR" id="P02530"/>
<dbReference type="GO" id="GO:0005212">
    <property type="term" value="F:structural constituent of eye lens"/>
    <property type="evidence" value="ECO:0007669"/>
    <property type="project" value="UniProtKB-KW"/>
</dbReference>
<dbReference type="GO" id="GO:0002088">
    <property type="term" value="P:lens development in camera-type eye"/>
    <property type="evidence" value="ECO:0007669"/>
    <property type="project" value="TreeGrafter"/>
</dbReference>
<dbReference type="GO" id="GO:0007601">
    <property type="term" value="P:visual perception"/>
    <property type="evidence" value="ECO:0007669"/>
    <property type="project" value="TreeGrafter"/>
</dbReference>
<dbReference type="FunFam" id="2.60.20.10:FF:000003">
    <property type="entry name" value="Crystallin gamma S"/>
    <property type="match status" value="1"/>
</dbReference>
<dbReference type="Gene3D" id="2.60.20.10">
    <property type="entry name" value="Crystallins"/>
    <property type="match status" value="2"/>
</dbReference>
<dbReference type="InterPro" id="IPR050252">
    <property type="entry name" value="Beta/Gamma-Crystallin"/>
</dbReference>
<dbReference type="InterPro" id="IPR001064">
    <property type="entry name" value="Beta/gamma_crystallin"/>
</dbReference>
<dbReference type="InterPro" id="IPR011024">
    <property type="entry name" value="G_crystallin-like"/>
</dbReference>
<dbReference type="PANTHER" id="PTHR11818">
    <property type="entry name" value="BETA/GAMMA CRYSTALLIN"/>
    <property type="match status" value="1"/>
</dbReference>
<dbReference type="PANTHER" id="PTHR11818:SF6">
    <property type="entry name" value="GAMMA-CRYSTALLIN S"/>
    <property type="match status" value="1"/>
</dbReference>
<dbReference type="Pfam" id="PF00030">
    <property type="entry name" value="Crystall"/>
    <property type="match status" value="2"/>
</dbReference>
<dbReference type="PRINTS" id="PR01367">
    <property type="entry name" value="BGCRYSTALLIN"/>
</dbReference>
<dbReference type="SMART" id="SM00247">
    <property type="entry name" value="XTALbg"/>
    <property type="match status" value="2"/>
</dbReference>
<dbReference type="SUPFAM" id="SSF49695">
    <property type="entry name" value="gamma-Crystallin-like"/>
    <property type="match status" value="1"/>
</dbReference>
<dbReference type="PROSITE" id="PS50915">
    <property type="entry name" value="CRYSTALLIN_BETA_GAMMA"/>
    <property type="match status" value="3"/>
</dbReference>